<gene>
    <name type="primary">VEGFA</name>
    <name type="synonym">VEGF</name>
</gene>
<organism>
    <name type="scientific">Ovis aries</name>
    <name type="common">Sheep</name>
    <dbReference type="NCBI Taxonomy" id="9940"/>
    <lineage>
        <taxon>Eukaryota</taxon>
        <taxon>Metazoa</taxon>
        <taxon>Chordata</taxon>
        <taxon>Craniata</taxon>
        <taxon>Vertebrata</taxon>
        <taxon>Euteleostomi</taxon>
        <taxon>Mammalia</taxon>
        <taxon>Eutheria</taxon>
        <taxon>Laurasiatheria</taxon>
        <taxon>Artiodactyla</taxon>
        <taxon>Ruminantia</taxon>
        <taxon>Pecora</taxon>
        <taxon>Bovidae</taxon>
        <taxon>Caprinae</taxon>
        <taxon>Ovis</taxon>
    </lineage>
</organism>
<accession>P50412</accession>
<reference key="1">
    <citation type="journal article" date="1996" name="J. Reprod. Fertil.">
        <title>Characterization and expression of vascular endothelial growth factor (VEGF) in the ovine corpus luteum.</title>
        <authorList>
            <person name="Redmer D.A."/>
            <person name="Dai Y."/>
            <person name="Li J."/>
            <person name="Charnock-Jones D.S."/>
            <person name="Smith S.K."/>
            <person name="Reynolds L.P."/>
            <person name="Moor R.M."/>
        </authorList>
    </citation>
    <scope>NUCLEOTIDE SEQUENCE [MRNA]</scope>
    <source>
        <tissue>Kidney</tissue>
    </source>
</reference>
<dbReference type="EMBL" id="X89506">
    <property type="protein sequence ID" value="CAA61677.1"/>
    <property type="molecule type" value="mRNA"/>
</dbReference>
<dbReference type="PIR" id="S57956">
    <property type="entry name" value="S57956"/>
</dbReference>
<dbReference type="RefSeq" id="NP_001020281.1">
    <property type="nucleotide sequence ID" value="NM_001025110.1"/>
</dbReference>
<dbReference type="SMR" id="P50412"/>
<dbReference type="STRING" id="9940.ENSOARP00000008938"/>
<dbReference type="GlyCosmos" id="P50412">
    <property type="glycosylation" value="1 site, No reported glycans"/>
</dbReference>
<dbReference type="PaxDb" id="9940-ENSOARP00000008938"/>
<dbReference type="GeneID" id="443103"/>
<dbReference type="KEGG" id="oas:443103"/>
<dbReference type="CTD" id="7422"/>
<dbReference type="eggNOG" id="ENOG502QVI8">
    <property type="taxonomic scope" value="Eukaryota"/>
</dbReference>
<dbReference type="OrthoDB" id="6370328at2759"/>
<dbReference type="Proteomes" id="UP000002356">
    <property type="component" value="Unplaced"/>
</dbReference>
<dbReference type="GO" id="GO:0005615">
    <property type="term" value="C:extracellular space"/>
    <property type="evidence" value="ECO:0007669"/>
    <property type="project" value="TreeGrafter"/>
</dbReference>
<dbReference type="GO" id="GO:0016020">
    <property type="term" value="C:membrane"/>
    <property type="evidence" value="ECO:0007669"/>
    <property type="project" value="InterPro"/>
</dbReference>
<dbReference type="GO" id="GO:0042056">
    <property type="term" value="F:chemoattractant activity"/>
    <property type="evidence" value="ECO:0007669"/>
    <property type="project" value="TreeGrafter"/>
</dbReference>
<dbReference type="GO" id="GO:0008083">
    <property type="term" value="F:growth factor activity"/>
    <property type="evidence" value="ECO:0007669"/>
    <property type="project" value="UniProtKB-KW"/>
</dbReference>
<dbReference type="GO" id="GO:0008201">
    <property type="term" value="F:heparin binding"/>
    <property type="evidence" value="ECO:0007669"/>
    <property type="project" value="UniProtKB-KW"/>
</dbReference>
<dbReference type="GO" id="GO:0005172">
    <property type="term" value="F:vascular endothelial growth factor receptor binding"/>
    <property type="evidence" value="ECO:0007669"/>
    <property type="project" value="TreeGrafter"/>
</dbReference>
<dbReference type="GO" id="GO:0050930">
    <property type="term" value="P:induction of positive chemotaxis"/>
    <property type="evidence" value="ECO:0007669"/>
    <property type="project" value="TreeGrafter"/>
</dbReference>
<dbReference type="GO" id="GO:0097475">
    <property type="term" value="P:motor neuron migration"/>
    <property type="evidence" value="ECO:0000250"/>
    <property type="project" value="UniProtKB"/>
</dbReference>
<dbReference type="GO" id="GO:0045766">
    <property type="term" value="P:positive regulation of angiogenesis"/>
    <property type="evidence" value="ECO:0000250"/>
    <property type="project" value="UniProtKB"/>
</dbReference>
<dbReference type="GO" id="GO:0051781">
    <property type="term" value="P:positive regulation of cell division"/>
    <property type="evidence" value="ECO:0007669"/>
    <property type="project" value="UniProtKB-KW"/>
</dbReference>
<dbReference type="GO" id="GO:0010595">
    <property type="term" value="P:positive regulation of endothelial cell migration"/>
    <property type="evidence" value="ECO:0000250"/>
    <property type="project" value="UniProtKB"/>
</dbReference>
<dbReference type="GO" id="GO:0001938">
    <property type="term" value="P:positive regulation of endothelial cell proliferation"/>
    <property type="evidence" value="ECO:0000250"/>
    <property type="project" value="UniProtKB"/>
</dbReference>
<dbReference type="GO" id="GO:0051894">
    <property type="term" value="P:positive regulation of focal adhesion assembly"/>
    <property type="evidence" value="ECO:0000250"/>
    <property type="project" value="UniProtKB"/>
</dbReference>
<dbReference type="GO" id="GO:0060754">
    <property type="term" value="P:positive regulation of mast cell chemotaxis"/>
    <property type="evidence" value="ECO:0007669"/>
    <property type="project" value="TreeGrafter"/>
</dbReference>
<dbReference type="GO" id="GO:0050731">
    <property type="term" value="P:positive regulation of peptidyl-tyrosine phosphorylation"/>
    <property type="evidence" value="ECO:0000250"/>
    <property type="project" value="UniProtKB"/>
</dbReference>
<dbReference type="GO" id="GO:0001934">
    <property type="term" value="P:positive regulation of protein phosphorylation"/>
    <property type="evidence" value="ECO:0000250"/>
    <property type="project" value="UniProtKB"/>
</dbReference>
<dbReference type="GO" id="GO:0031334">
    <property type="term" value="P:positive regulation of protein-containing complex assembly"/>
    <property type="evidence" value="ECO:0000250"/>
    <property type="project" value="UniProtKB"/>
</dbReference>
<dbReference type="GO" id="GO:0001666">
    <property type="term" value="P:response to hypoxia"/>
    <property type="evidence" value="ECO:0007669"/>
    <property type="project" value="TreeGrafter"/>
</dbReference>
<dbReference type="GO" id="GO:0002040">
    <property type="term" value="P:sprouting angiogenesis"/>
    <property type="evidence" value="ECO:0007669"/>
    <property type="project" value="TreeGrafter"/>
</dbReference>
<dbReference type="GO" id="GO:0035148">
    <property type="term" value="P:tube formation"/>
    <property type="evidence" value="ECO:0000250"/>
    <property type="project" value="UniProtKB"/>
</dbReference>
<dbReference type="GO" id="GO:0048010">
    <property type="term" value="P:vascular endothelial growth factor receptor signaling pathway"/>
    <property type="evidence" value="ECO:0007669"/>
    <property type="project" value="TreeGrafter"/>
</dbReference>
<dbReference type="GO" id="GO:0038084">
    <property type="term" value="P:vascular endothelial growth factor signaling pathway"/>
    <property type="evidence" value="ECO:0007669"/>
    <property type="project" value="TreeGrafter"/>
</dbReference>
<dbReference type="CDD" id="cd00135">
    <property type="entry name" value="PDGF"/>
    <property type="match status" value="1"/>
</dbReference>
<dbReference type="FunFam" id="2.10.90.10:FF:000009">
    <property type="entry name" value="Vascular endothelial growth factor A"/>
    <property type="match status" value="1"/>
</dbReference>
<dbReference type="Gene3D" id="2.10.90.10">
    <property type="entry name" value="Cystine-knot cytokines"/>
    <property type="match status" value="1"/>
</dbReference>
<dbReference type="InterPro" id="IPR029034">
    <property type="entry name" value="Cystine-knot_cytokine"/>
</dbReference>
<dbReference type="InterPro" id="IPR023581">
    <property type="entry name" value="PD_growth_factor_CS"/>
</dbReference>
<dbReference type="InterPro" id="IPR000072">
    <property type="entry name" value="PDGF/VEGF_dom"/>
</dbReference>
<dbReference type="InterPro" id="IPR050507">
    <property type="entry name" value="PDGF/VEGF_growth_factor"/>
</dbReference>
<dbReference type="PANTHER" id="PTHR12025">
    <property type="entry name" value="VASCULAR ENDOTHELIAL GROWTH FACTOR"/>
    <property type="match status" value="1"/>
</dbReference>
<dbReference type="PANTHER" id="PTHR12025:SF5">
    <property type="entry name" value="VASCULAR ENDOTHELIAL GROWTH FACTOR A, LONG FORM"/>
    <property type="match status" value="1"/>
</dbReference>
<dbReference type="Pfam" id="PF00341">
    <property type="entry name" value="PDGF"/>
    <property type="match status" value="1"/>
</dbReference>
<dbReference type="SMART" id="SM00141">
    <property type="entry name" value="PDGF"/>
    <property type="match status" value="1"/>
</dbReference>
<dbReference type="SUPFAM" id="SSF57501">
    <property type="entry name" value="Cystine-knot cytokines"/>
    <property type="match status" value="1"/>
</dbReference>
<dbReference type="PROSITE" id="PS00249">
    <property type="entry name" value="PDGF_1"/>
    <property type="match status" value="1"/>
</dbReference>
<dbReference type="PROSITE" id="PS50278">
    <property type="entry name" value="PDGF_2"/>
    <property type="match status" value="1"/>
</dbReference>
<proteinExistence type="evidence at transcript level"/>
<comment type="function">
    <text evidence="2 4">Growth factor active in angiogenesis, vasculogenesis and endothelial cell growth. Induces endothelial cell proliferation, promotes cell migration, inhibits apoptosis and induces permeabilization of blood vessels. Binds to the FLT1/VEGFR1 and KDR/VEGFR2 receptors, heparan sulfate and heparin (By similarity). Binding to NRP1 receptor initiates a signaling pathway needed for motor neuron axon guidance and cell body migration, including for the caudal migration of facial motor neurons from rhombomere 4 to rhombomere 6 during embryonic development (By similarity). Also binds the DEAR/FBXW7-AS1 receptor (By similarity).</text>
</comment>
<comment type="subunit">
    <text evidence="2 3">Homodimer; disulfide-linked (By similarity). Also found as heterodimer with PGF (By similarity). Interacts with NRP1. Interacts with isoform 2 of BSG. Interacts with CD82; this interaction inhibits VEGFA-mediated signaling pathway (By similarity).</text>
</comment>
<comment type="similarity">
    <text evidence="6">Belongs to the PDGF/VEGF growth factor family.</text>
</comment>
<protein>
    <recommendedName>
        <fullName>Vascular endothelial growth factor A</fullName>
        <shortName>VEGF-A</shortName>
    </recommendedName>
    <alternativeName>
        <fullName>Vascular permeability factor</fullName>
        <shortName>VPF</shortName>
    </alternativeName>
</protein>
<name>VEGFA_SHEEP</name>
<feature type="signal peptide" evidence="1">
    <location>
        <begin position="1"/>
        <end position="26"/>
    </location>
</feature>
<feature type="chain" id="PRO_0000023391" description="Vascular endothelial growth factor A">
    <location>
        <begin position="27"/>
        <end position="146"/>
    </location>
</feature>
<feature type="glycosylation site" description="N-linked (GlcNAc...) asparagine" evidence="5">
    <location>
        <position position="100"/>
    </location>
</feature>
<feature type="disulfide bond" evidence="1">
    <location>
        <begin position="51"/>
        <end position="93"/>
    </location>
</feature>
<feature type="disulfide bond" description="Interchain" evidence="1">
    <location>
        <position position="76"/>
    </location>
</feature>
<feature type="disulfide bond" evidence="1">
    <location>
        <begin position="82"/>
        <end position="127"/>
    </location>
</feature>
<feature type="disulfide bond" description="Interchain" evidence="1">
    <location>
        <position position="85"/>
    </location>
</feature>
<feature type="disulfide bond" evidence="1">
    <location>
        <begin position="86"/>
        <end position="129"/>
    </location>
</feature>
<sequence length="146" mass="17247">MNFLLSWVHWSLALLLYLHHAKWSQAAPMAEGGQKPHEVMKFMDVYQRSFCRPIETLVDIFQEYPDEIEFIFKPSCVPLMRCGGCCNDESLECVPTEEFNITMQIMRIKPHQSQHIGEMSFLQHNKCECRPKKDKARQEKCDKPRR</sequence>
<keyword id="KW-0037">Angiogenesis</keyword>
<keyword id="KW-0217">Developmental protein</keyword>
<keyword id="KW-0221">Differentiation</keyword>
<keyword id="KW-1015">Disulfide bond</keyword>
<keyword id="KW-0325">Glycoprotein</keyword>
<keyword id="KW-0339">Growth factor</keyword>
<keyword id="KW-0358">Heparin-binding</keyword>
<keyword id="KW-0497">Mitogen</keyword>
<keyword id="KW-1185">Reference proteome</keyword>
<keyword id="KW-0732">Signal</keyword>
<evidence type="ECO:0000250" key="1"/>
<evidence type="ECO:0000250" key="2">
    <source>
        <dbReference type="UniProtKB" id="P15692"/>
    </source>
</evidence>
<evidence type="ECO:0000250" key="3">
    <source>
        <dbReference type="UniProtKB" id="P16612"/>
    </source>
</evidence>
<evidence type="ECO:0000250" key="4">
    <source>
        <dbReference type="UniProtKB" id="Q00731"/>
    </source>
</evidence>
<evidence type="ECO:0000255" key="5"/>
<evidence type="ECO:0000305" key="6"/>